<evidence type="ECO:0000250" key="1"/>
<evidence type="ECO:0000305" key="2"/>
<keyword id="KW-0119">Carbohydrate metabolism</keyword>
<keyword id="KW-0520">NAD</keyword>
<keyword id="KW-0521">NADP</keyword>
<keyword id="KW-0560">Oxidoreductase</keyword>
<keyword id="KW-0859">Xylose metabolism</keyword>
<feature type="chain" id="PRO_0000124662" description="NAD(P)H-dependent D-xylose reductase I,II">
    <location>
        <begin position="1"/>
        <end position="324"/>
    </location>
</feature>
<feature type="active site" description="Proton donor" evidence="1">
    <location>
        <position position="54"/>
    </location>
</feature>
<feature type="binding site" evidence="1">
    <location>
        <position position="116"/>
    </location>
    <ligand>
        <name>substrate</name>
    </ligand>
</feature>
<feature type="binding site" evidence="1">
    <location>
        <begin position="171"/>
        <end position="172"/>
    </location>
    <ligand>
        <name>NAD(+)</name>
        <dbReference type="ChEBI" id="CHEBI:57540"/>
    </ligand>
</feature>
<feature type="binding site" evidence="1">
    <location>
        <begin position="220"/>
        <end position="229"/>
    </location>
    <ligand>
        <name>NAD(+)</name>
        <dbReference type="ChEBI" id="CHEBI:57540"/>
    </ligand>
</feature>
<feature type="binding site" evidence="1">
    <location>
        <begin position="276"/>
        <end position="286"/>
    </location>
    <ligand>
        <name>NAD(+)</name>
        <dbReference type="ChEBI" id="CHEBI:57540"/>
    </ligand>
</feature>
<feature type="site" description="Lowers pKa of active site Tyr" evidence="1">
    <location>
        <position position="83"/>
    </location>
</feature>
<protein>
    <recommendedName>
        <fullName>NAD(P)H-dependent D-xylose reductase I,II</fullName>
        <shortName>XR</shortName>
        <ecNumber>1.1.1.307</ecNumber>
    </recommendedName>
</protein>
<sequence>MSTTPTIPTIKLNSGYEMPLVGFGCWKVTNATAADQIYNAIKTGYRLFDGAEDYGNEKEVGEGINRAIKEGLVKREELFITSKLWNNFHDPKNVETALNKTLSDLNLDYVDLFLIHFPIAFKFVPIEEKYPPGFYCGDGDNFHYEDVPLLDTWKALEKLVEAGKIKSIGISNFTGALIYDLIRGATIKPAVLQIEHHPYLQQPKLIEYVQKAGIAITGYSSFGPQSFLELESKRALNTPTLFEHETIKLIADKHGKSPAQVLLRWATQRNIAVIPKSNNPERLAQNLSVVDFDLTKDDLDNIAKLDIGLRFNDPWDWDNIPIFV</sequence>
<gene>
    <name type="primary">xyrA</name>
</gene>
<name>XYL1_CANTR</name>
<reference key="1">
    <citation type="journal article" date="1995" name="J. Ferment. Bioeng.">
        <title>Cloning and sequencing of two D-xylose reductase genes (xyrA and xyrB) from Candida tropicalis.</title>
        <authorList>
            <person name="Yokoyama S."/>
            <person name="Kinoshita Y."/>
            <person name="Suzuki T."/>
            <person name="Kawai K."/>
            <person name="Horitsu H."/>
            <person name="Takamizawa K."/>
        </authorList>
    </citation>
    <scope>NUCLEOTIDE SEQUENCE [GENOMIC DNA]</scope>
    <source>
        <strain>ATCC 96745 / CBS 4913 / NBRC 0618 / NRRL Y-5716</strain>
    </source>
</reference>
<comment type="function">
    <text evidence="1">Reduces D-xylose into xylitol. Has a preference for NADPH, but can also utilize NADH as cosubstrate (By similarity).</text>
</comment>
<comment type="catalytic activity">
    <reaction>
        <text>xylitol + NAD(+) = D-xylose + NADH + H(+)</text>
        <dbReference type="Rhea" id="RHEA:27441"/>
        <dbReference type="ChEBI" id="CHEBI:15378"/>
        <dbReference type="ChEBI" id="CHEBI:17151"/>
        <dbReference type="ChEBI" id="CHEBI:53455"/>
        <dbReference type="ChEBI" id="CHEBI:57540"/>
        <dbReference type="ChEBI" id="CHEBI:57945"/>
        <dbReference type="EC" id="1.1.1.307"/>
    </reaction>
</comment>
<comment type="catalytic activity">
    <reaction>
        <text>xylitol + NADP(+) = D-xylose + NADPH + H(+)</text>
        <dbReference type="Rhea" id="RHEA:27445"/>
        <dbReference type="ChEBI" id="CHEBI:15378"/>
        <dbReference type="ChEBI" id="CHEBI:17151"/>
        <dbReference type="ChEBI" id="CHEBI:53455"/>
        <dbReference type="ChEBI" id="CHEBI:57783"/>
        <dbReference type="ChEBI" id="CHEBI:58349"/>
        <dbReference type="EC" id="1.1.1.307"/>
    </reaction>
</comment>
<comment type="pathway">
    <text>Carbohydrate metabolism; D-xylose degradation.</text>
</comment>
<comment type="similarity">
    <text evidence="2">Belongs to the aldo/keto reductase family.</text>
</comment>
<accession>O13283</accession>
<dbReference type="EC" id="1.1.1.307"/>
<dbReference type="EMBL" id="AB002105">
    <property type="protein sequence ID" value="BAA19476.1"/>
    <property type="molecule type" value="Genomic_DNA"/>
</dbReference>
<dbReference type="SMR" id="O13283"/>
<dbReference type="KEGG" id="ag:BAA19476"/>
<dbReference type="VEuPathDB" id="FungiDB:CTMYA2_054230"/>
<dbReference type="VEuPathDB" id="FungiDB:CTRG_05993"/>
<dbReference type="UniPathway" id="UPA00810"/>
<dbReference type="GO" id="GO:0032866">
    <property type="term" value="F:D-xylose reductase (NADPH) activity"/>
    <property type="evidence" value="ECO:0007669"/>
    <property type="project" value="InterPro"/>
</dbReference>
<dbReference type="GO" id="GO:0042843">
    <property type="term" value="P:D-xylose catabolic process"/>
    <property type="evidence" value="ECO:0007669"/>
    <property type="project" value="UniProtKB-UniPathway"/>
</dbReference>
<dbReference type="CDD" id="cd19113">
    <property type="entry name" value="AKR_AKR2B1-10"/>
    <property type="match status" value="1"/>
</dbReference>
<dbReference type="FunFam" id="3.20.20.100:FF:000007">
    <property type="entry name" value="NAD(P)H-dependent D-xylose reductase xyl1"/>
    <property type="match status" value="1"/>
</dbReference>
<dbReference type="Gene3D" id="3.20.20.100">
    <property type="entry name" value="NADP-dependent oxidoreductase domain"/>
    <property type="match status" value="1"/>
</dbReference>
<dbReference type="InterPro" id="IPR020471">
    <property type="entry name" value="AKR"/>
</dbReference>
<dbReference type="InterPro" id="IPR044486">
    <property type="entry name" value="AKR2B1"/>
</dbReference>
<dbReference type="InterPro" id="IPR018170">
    <property type="entry name" value="Aldo/ket_reductase_CS"/>
</dbReference>
<dbReference type="InterPro" id="IPR023210">
    <property type="entry name" value="NADP_OxRdtase_dom"/>
</dbReference>
<dbReference type="InterPro" id="IPR036812">
    <property type="entry name" value="NADP_OxRdtase_dom_sf"/>
</dbReference>
<dbReference type="PANTHER" id="PTHR11732">
    <property type="entry name" value="ALDO/KETO REDUCTASE"/>
    <property type="match status" value="1"/>
</dbReference>
<dbReference type="Pfam" id="PF00248">
    <property type="entry name" value="Aldo_ket_red"/>
    <property type="match status" value="1"/>
</dbReference>
<dbReference type="PIRSF" id="PIRSF000097">
    <property type="entry name" value="AKR"/>
    <property type="match status" value="1"/>
</dbReference>
<dbReference type="PRINTS" id="PR00069">
    <property type="entry name" value="ALDKETRDTASE"/>
</dbReference>
<dbReference type="SUPFAM" id="SSF51430">
    <property type="entry name" value="NAD(P)-linked oxidoreductase"/>
    <property type="match status" value="1"/>
</dbReference>
<dbReference type="PROSITE" id="PS00798">
    <property type="entry name" value="ALDOKETO_REDUCTASE_1"/>
    <property type="match status" value="1"/>
</dbReference>
<dbReference type="PROSITE" id="PS00062">
    <property type="entry name" value="ALDOKETO_REDUCTASE_2"/>
    <property type="match status" value="1"/>
</dbReference>
<dbReference type="PROSITE" id="PS00063">
    <property type="entry name" value="ALDOKETO_REDUCTASE_3"/>
    <property type="match status" value="1"/>
</dbReference>
<proteinExistence type="inferred from homology"/>
<organism>
    <name type="scientific">Candida tropicalis</name>
    <name type="common">Yeast</name>
    <dbReference type="NCBI Taxonomy" id="5482"/>
    <lineage>
        <taxon>Eukaryota</taxon>
        <taxon>Fungi</taxon>
        <taxon>Dikarya</taxon>
        <taxon>Ascomycota</taxon>
        <taxon>Saccharomycotina</taxon>
        <taxon>Pichiomycetes</taxon>
        <taxon>Debaryomycetaceae</taxon>
        <taxon>Candida/Lodderomyces clade</taxon>
        <taxon>Candida</taxon>
    </lineage>
</organism>